<gene>
    <name evidence="1" type="primary">deoA</name>
    <name type="ordered locus">VV1_1726</name>
</gene>
<sequence>MYLPQEIIRKKRDGEALTADEINFFIQGVANNTVSEGQIAAFAMTIFFNEMTMPERIALTCAMRDSGMVIDWSHMNFGGPIVDKHSTGGVGDVTSLMLGPMVAACGGFVPMISGRGLGHTGGTLDKLEAIPGYNITPSNDVFGQVTKEAGVAIIGQTGDLAPADKRVYATRDITATVDNISLITASILSKKLAAGLESLVMDVKVGSGAFMPTYEASEELAKSIVAVANGAGTKTTAILTDMNQVLASSAGNAVEVREAVRFLKGEYRNPRLLEVTMASCAEMLVLGKLAENTEDARAKLMEVLDNGKAAECFGKMVAGLGGPVDFMDNYDNYLDKAEIIKPVYAKETGVVSAMDTRAIGMAVVAMGGGRRVATDSIDYAVGFDQFIRLGEIASSEKPLAMIHARNEAQWQEAANALQAAIKVGGEYTPTPDVYRQIRQEDI</sequence>
<protein>
    <recommendedName>
        <fullName evidence="1">Thymidine phosphorylase</fullName>
        <ecNumber evidence="1">2.4.2.4</ecNumber>
    </recommendedName>
    <alternativeName>
        <fullName evidence="1">TdRPase</fullName>
    </alternativeName>
</protein>
<keyword id="KW-0328">Glycosyltransferase</keyword>
<keyword id="KW-0808">Transferase</keyword>
<proteinExistence type="inferred from homology"/>
<feature type="chain" id="PRO_0000059073" description="Thymidine phosphorylase">
    <location>
        <begin position="1"/>
        <end position="442"/>
    </location>
</feature>
<evidence type="ECO:0000255" key="1">
    <source>
        <dbReference type="HAMAP-Rule" id="MF_01628"/>
    </source>
</evidence>
<name>TYPH_VIBVU</name>
<accession>Q8DBT1</accession>
<organism>
    <name type="scientific">Vibrio vulnificus (strain CMCP6)</name>
    <dbReference type="NCBI Taxonomy" id="216895"/>
    <lineage>
        <taxon>Bacteria</taxon>
        <taxon>Pseudomonadati</taxon>
        <taxon>Pseudomonadota</taxon>
        <taxon>Gammaproteobacteria</taxon>
        <taxon>Vibrionales</taxon>
        <taxon>Vibrionaceae</taxon>
        <taxon>Vibrio</taxon>
    </lineage>
</organism>
<comment type="function">
    <text evidence="1">The enzymes which catalyze the reversible phosphorolysis of pyrimidine nucleosides are involved in the degradation of these compounds and in their utilization as carbon and energy sources, or in the rescue of pyrimidine bases for nucleotide synthesis.</text>
</comment>
<comment type="catalytic activity">
    <reaction evidence="1">
        <text>thymidine + phosphate = 2-deoxy-alpha-D-ribose 1-phosphate + thymine</text>
        <dbReference type="Rhea" id="RHEA:16037"/>
        <dbReference type="ChEBI" id="CHEBI:17748"/>
        <dbReference type="ChEBI" id="CHEBI:17821"/>
        <dbReference type="ChEBI" id="CHEBI:43474"/>
        <dbReference type="ChEBI" id="CHEBI:57259"/>
        <dbReference type="EC" id="2.4.2.4"/>
    </reaction>
</comment>
<comment type="pathway">
    <text evidence="1">Pyrimidine metabolism; dTMP biosynthesis via salvage pathway; dTMP from thymine: step 1/2.</text>
</comment>
<comment type="subunit">
    <text evidence="1">Homodimer.</text>
</comment>
<comment type="similarity">
    <text evidence="1">Belongs to the thymidine/pyrimidine-nucleoside phosphorylase family.</text>
</comment>
<dbReference type="EC" id="2.4.2.4" evidence="1"/>
<dbReference type="EMBL" id="AE016795">
    <property type="protein sequence ID" value="AAO10141.1"/>
    <property type="molecule type" value="Genomic_DNA"/>
</dbReference>
<dbReference type="RefSeq" id="WP_011079643.1">
    <property type="nucleotide sequence ID" value="NC_004459.3"/>
</dbReference>
<dbReference type="SMR" id="Q8DBT1"/>
<dbReference type="GeneID" id="93895973"/>
<dbReference type="KEGG" id="vvu:VV1_1726"/>
<dbReference type="HOGENOM" id="CLU_025040_0_1_6"/>
<dbReference type="UniPathway" id="UPA00578">
    <property type="reaction ID" value="UER00638"/>
</dbReference>
<dbReference type="Proteomes" id="UP000002275">
    <property type="component" value="Chromosome 1"/>
</dbReference>
<dbReference type="GO" id="GO:0005829">
    <property type="term" value="C:cytosol"/>
    <property type="evidence" value="ECO:0007669"/>
    <property type="project" value="TreeGrafter"/>
</dbReference>
<dbReference type="GO" id="GO:0004645">
    <property type="term" value="F:1,4-alpha-oligoglucan phosphorylase activity"/>
    <property type="evidence" value="ECO:0007669"/>
    <property type="project" value="InterPro"/>
</dbReference>
<dbReference type="GO" id="GO:0009032">
    <property type="term" value="F:thymidine phosphorylase activity"/>
    <property type="evidence" value="ECO:0007669"/>
    <property type="project" value="UniProtKB-UniRule"/>
</dbReference>
<dbReference type="GO" id="GO:0006206">
    <property type="term" value="P:pyrimidine nucleobase metabolic process"/>
    <property type="evidence" value="ECO:0007669"/>
    <property type="project" value="InterPro"/>
</dbReference>
<dbReference type="GO" id="GO:0046104">
    <property type="term" value="P:thymidine metabolic process"/>
    <property type="evidence" value="ECO:0007669"/>
    <property type="project" value="UniProtKB-UniRule"/>
</dbReference>
<dbReference type="FunFam" id="3.40.1030.10:FF:000001">
    <property type="entry name" value="Thymidine phosphorylase"/>
    <property type="match status" value="1"/>
</dbReference>
<dbReference type="FunFam" id="3.90.1170.30:FF:000001">
    <property type="entry name" value="Thymidine phosphorylase"/>
    <property type="match status" value="1"/>
</dbReference>
<dbReference type="Gene3D" id="3.40.1030.10">
    <property type="entry name" value="Nucleoside phosphorylase/phosphoribosyltransferase catalytic domain"/>
    <property type="match status" value="1"/>
</dbReference>
<dbReference type="Gene3D" id="3.90.1170.30">
    <property type="entry name" value="Pyrimidine nucleoside phosphorylase-like, C-terminal domain"/>
    <property type="match status" value="1"/>
</dbReference>
<dbReference type="Gene3D" id="1.20.970.10">
    <property type="entry name" value="Transferase, Pyrimidine Nucleoside Phosphorylase, Chain C"/>
    <property type="match status" value="1"/>
</dbReference>
<dbReference type="HAMAP" id="MF_01628">
    <property type="entry name" value="Thymid_phosp"/>
    <property type="match status" value="1"/>
</dbReference>
<dbReference type="InterPro" id="IPR000312">
    <property type="entry name" value="Glycosyl_Trfase_fam3"/>
</dbReference>
<dbReference type="InterPro" id="IPR017459">
    <property type="entry name" value="Glycosyl_Trfase_fam3_N_dom"/>
</dbReference>
<dbReference type="InterPro" id="IPR036320">
    <property type="entry name" value="Glycosyl_Trfase_fam3_N_dom_sf"/>
</dbReference>
<dbReference type="InterPro" id="IPR035902">
    <property type="entry name" value="Nuc_phospho_transferase"/>
</dbReference>
<dbReference type="InterPro" id="IPR036566">
    <property type="entry name" value="PYNP-like_C_sf"/>
</dbReference>
<dbReference type="InterPro" id="IPR013102">
    <property type="entry name" value="PYNP_C"/>
</dbReference>
<dbReference type="InterPro" id="IPR018090">
    <property type="entry name" value="Pyrmidine_PPas_bac/euk"/>
</dbReference>
<dbReference type="InterPro" id="IPR017872">
    <property type="entry name" value="Pyrmidine_PPase_CS"/>
</dbReference>
<dbReference type="InterPro" id="IPR000053">
    <property type="entry name" value="Thymidine/pyrmidine_PPase"/>
</dbReference>
<dbReference type="InterPro" id="IPR013465">
    <property type="entry name" value="Thymidine_Pase"/>
</dbReference>
<dbReference type="NCBIfam" id="NF004490">
    <property type="entry name" value="PRK05820.1"/>
    <property type="match status" value="1"/>
</dbReference>
<dbReference type="NCBIfam" id="TIGR02643">
    <property type="entry name" value="T_phosphoryl"/>
    <property type="match status" value="1"/>
</dbReference>
<dbReference type="NCBIfam" id="TIGR02644">
    <property type="entry name" value="Y_phosphoryl"/>
    <property type="match status" value="1"/>
</dbReference>
<dbReference type="PANTHER" id="PTHR10515">
    <property type="entry name" value="THYMIDINE PHOSPHORYLASE"/>
    <property type="match status" value="1"/>
</dbReference>
<dbReference type="PANTHER" id="PTHR10515:SF0">
    <property type="entry name" value="THYMIDINE PHOSPHORYLASE"/>
    <property type="match status" value="1"/>
</dbReference>
<dbReference type="Pfam" id="PF02885">
    <property type="entry name" value="Glycos_trans_3N"/>
    <property type="match status" value="1"/>
</dbReference>
<dbReference type="Pfam" id="PF00591">
    <property type="entry name" value="Glycos_transf_3"/>
    <property type="match status" value="1"/>
</dbReference>
<dbReference type="Pfam" id="PF07831">
    <property type="entry name" value="PYNP_C"/>
    <property type="match status" value="1"/>
</dbReference>
<dbReference type="PIRSF" id="PIRSF000478">
    <property type="entry name" value="TP_PyNP"/>
    <property type="match status" value="1"/>
</dbReference>
<dbReference type="SMART" id="SM00941">
    <property type="entry name" value="PYNP_C"/>
    <property type="match status" value="1"/>
</dbReference>
<dbReference type="SUPFAM" id="SSF52418">
    <property type="entry name" value="Nucleoside phosphorylase/phosphoribosyltransferase catalytic domain"/>
    <property type="match status" value="1"/>
</dbReference>
<dbReference type="SUPFAM" id="SSF47648">
    <property type="entry name" value="Nucleoside phosphorylase/phosphoribosyltransferase N-terminal domain"/>
    <property type="match status" value="1"/>
</dbReference>
<dbReference type="SUPFAM" id="SSF54680">
    <property type="entry name" value="Pyrimidine nucleoside phosphorylase C-terminal domain"/>
    <property type="match status" value="1"/>
</dbReference>
<dbReference type="PROSITE" id="PS00647">
    <property type="entry name" value="THYMID_PHOSPHORYLASE"/>
    <property type="match status" value="1"/>
</dbReference>
<reference key="1">
    <citation type="submission" date="2002-12" db="EMBL/GenBank/DDBJ databases">
        <title>Complete genome sequence of Vibrio vulnificus CMCP6.</title>
        <authorList>
            <person name="Rhee J.H."/>
            <person name="Kim S.Y."/>
            <person name="Chung S.S."/>
            <person name="Kim J.J."/>
            <person name="Moon Y.H."/>
            <person name="Jeong H."/>
            <person name="Choy H.E."/>
        </authorList>
    </citation>
    <scope>NUCLEOTIDE SEQUENCE [LARGE SCALE GENOMIC DNA]</scope>
    <source>
        <strain>CMCP6</strain>
    </source>
</reference>